<gene>
    <name evidence="1" type="primary">atpG</name>
    <name type="ordered locus">BCE_5431</name>
</gene>
<comment type="function">
    <text evidence="1">Produces ATP from ADP in the presence of a proton gradient across the membrane. The gamma chain is believed to be important in regulating ATPase activity and the flow of protons through the CF(0) complex.</text>
</comment>
<comment type="subunit">
    <text evidence="1">F-type ATPases have 2 components, CF(1) - the catalytic core - and CF(0) - the membrane proton channel. CF(1) has five subunits: alpha(3), beta(3), gamma(1), delta(1), epsilon(1). CF(0) has three main subunits: a, b and c.</text>
</comment>
<comment type="subcellular location">
    <subcellularLocation>
        <location evidence="1">Cell membrane</location>
        <topology evidence="1">Peripheral membrane protein</topology>
    </subcellularLocation>
</comment>
<comment type="similarity">
    <text evidence="1">Belongs to the ATPase gamma chain family.</text>
</comment>
<reference key="1">
    <citation type="journal article" date="2004" name="Nucleic Acids Res.">
        <title>The genome sequence of Bacillus cereus ATCC 10987 reveals metabolic adaptations and a large plasmid related to Bacillus anthracis pXO1.</title>
        <authorList>
            <person name="Rasko D.A."/>
            <person name="Ravel J."/>
            <person name="Oekstad O.A."/>
            <person name="Helgason E."/>
            <person name="Cer R.Z."/>
            <person name="Jiang L."/>
            <person name="Shores K.A."/>
            <person name="Fouts D.E."/>
            <person name="Tourasse N.J."/>
            <person name="Angiuoli S.V."/>
            <person name="Kolonay J.F."/>
            <person name="Nelson W.C."/>
            <person name="Kolstoe A.-B."/>
            <person name="Fraser C.M."/>
            <person name="Read T.D."/>
        </authorList>
    </citation>
    <scope>NUCLEOTIDE SEQUENCE [LARGE SCALE GENOMIC DNA]</scope>
    <source>
        <strain>ATCC 10987 / NRS 248</strain>
    </source>
</reference>
<name>ATPG_BACC1</name>
<feature type="chain" id="PRO_0000073225" description="ATP synthase gamma chain">
    <location>
        <begin position="1"/>
        <end position="286"/>
    </location>
</feature>
<accession>Q72XE7</accession>
<evidence type="ECO:0000255" key="1">
    <source>
        <dbReference type="HAMAP-Rule" id="MF_00815"/>
    </source>
</evidence>
<dbReference type="EMBL" id="AE017194">
    <property type="protein sequence ID" value="AAS44331.1"/>
    <property type="molecule type" value="Genomic_DNA"/>
</dbReference>
<dbReference type="SMR" id="Q72XE7"/>
<dbReference type="KEGG" id="bca:BCE_5431"/>
<dbReference type="HOGENOM" id="CLU_050669_0_1_9"/>
<dbReference type="Proteomes" id="UP000002527">
    <property type="component" value="Chromosome"/>
</dbReference>
<dbReference type="GO" id="GO:0005886">
    <property type="term" value="C:plasma membrane"/>
    <property type="evidence" value="ECO:0007669"/>
    <property type="project" value="UniProtKB-SubCell"/>
</dbReference>
<dbReference type="GO" id="GO:0045259">
    <property type="term" value="C:proton-transporting ATP synthase complex"/>
    <property type="evidence" value="ECO:0007669"/>
    <property type="project" value="UniProtKB-KW"/>
</dbReference>
<dbReference type="GO" id="GO:0005524">
    <property type="term" value="F:ATP binding"/>
    <property type="evidence" value="ECO:0007669"/>
    <property type="project" value="UniProtKB-UniRule"/>
</dbReference>
<dbReference type="GO" id="GO:0046933">
    <property type="term" value="F:proton-transporting ATP synthase activity, rotational mechanism"/>
    <property type="evidence" value="ECO:0007669"/>
    <property type="project" value="UniProtKB-UniRule"/>
</dbReference>
<dbReference type="GO" id="GO:0042777">
    <property type="term" value="P:proton motive force-driven plasma membrane ATP synthesis"/>
    <property type="evidence" value="ECO:0007669"/>
    <property type="project" value="UniProtKB-UniRule"/>
</dbReference>
<dbReference type="CDD" id="cd12151">
    <property type="entry name" value="F1-ATPase_gamma"/>
    <property type="match status" value="1"/>
</dbReference>
<dbReference type="FunFam" id="3.40.1380.10:FF:000002">
    <property type="entry name" value="ATP synthase gamma chain"/>
    <property type="match status" value="1"/>
</dbReference>
<dbReference type="Gene3D" id="3.40.1380.10">
    <property type="match status" value="1"/>
</dbReference>
<dbReference type="Gene3D" id="1.10.287.80">
    <property type="entry name" value="ATP synthase, gamma subunit, helix hairpin domain"/>
    <property type="match status" value="1"/>
</dbReference>
<dbReference type="HAMAP" id="MF_00815">
    <property type="entry name" value="ATP_synth_gamma_bact"/>
    <property type="match status" value="1"/>
</dbReference>
<dbReference type="InterPro" id="IPR035968">
    <property type="entry name" value="ATP_synth_F1_ATPase_gsu"/>
</dbReference>
<dbReference type="InterPro" id="IPR000131">
    <property type="entry name" value="ATP_synth_F1_gsu"/>
</dbReference>
<dbReference type="InterPro" id="IPR023632">
    <property type="entry name" value="ATP_synth_F1_gsu_CS"/>
</dbReference>
<dbReference type="NCBIfam" id="TIGR01146">
    <property type="entry name" value="ATPsyn_F1gamma"/>
    <property type="match status" value="1"/>
</dbReference>
<dbReference type="PANTHER" id="PTHR11693">
    <property type="entry name" value="ATP SYNTHASE GAMMA CHAIN"/>
    <property type="match status" value="1"/>
</dbReference>
<dbReference type="PANTHER" id="PTHR11693:SF22">
    <property type="entry name" value="ATP SYNTHASE SUBUNIT GAMMA, MITOCHONDRIAL"/>
    <property type="match status" value="1"/>
</dbReference>
<dbReference type="Pfam" id="PF00231">
    <property type="entry name" value="ATP-synt"/>
    <property type="match status" value="1"/>
</dbReference>
<dbReference type="PRINTS" id="PR00126">
    <property type="entry name" value="ATPASEGAMMA"/>
</dbReference>
<dbReference type="SUPFAM" id="SSF52943">
    <property type="entry name" value="ATP synthase (F1-ATPase), gamma subunit"/>
    <property type="match status" value="1"/>
</dbReference>
<dbReference type="PROSITE" id="PS00153">
    <property type="entry name" value="ATPASE_GAMMA"/>
    <property type="match status" value="1"/>
</dbReference>
<protein>
    <recommendedName>
        <fullName evidence="1">ATP synthase gamma chain</fullName>
    </recommendedName>
    <alternativeName>
        <fullName evidence="1">ATP synthase F1 sector gamma subunit</fullName>
    </alternativeName>
    <alternativeName>
        <fullName evidence="1">F-ATPase gamma subunit</fullName>
    </alternativeName>
</protein>
<proteinExistence type="inferred from homology"/>
<organism>
    <name type="scientific">Bacillus cereus (strain ATCC 10987 / NRS 248)</name>
    <dbReference type="NCBI Taxonomy" id="222523"/>
    <lineage>
        <taxon>Bacteria</taxon>
        <taxon>Bacillati</taxon>
        <taxon>Bacillota</taxon>
        <taxon>Bacilli</taxon>
        <taxon>Bacillales</taxon>
        <taxon>Bacillaceae</taxon>
        <taxon>Bacillus</taxon>
        <taxon>Bacillus cereus group</taxon>
    </lineage>
</organism>
<keyword id="KW-0066">ATP synthesis</keyword>
<keyword id="KW-1003">Cell membrane</keyword>
<keyword id="KW-0139">CF(1)</keyword>
<keyword id="KW-0375">Hydrogen ion transport</keyword>
<keyword id="KW-0406">Ion transport</keyword>
<keyword id="KW-0472">Membrane</keyword>
<keyword id="KW-0813">Transport</keyword>
<sequence>MASLRDIKAKINSTKKTSQITKAMEMVSASKLNRAEQNAKSFVPYMEKIQEVVASIAQGSKGINHPMLNARPVKRTGYIVITSDRGLAGGYNSNVLRTVSNVIRERHNMDSNQYSIIVLGRLGRDYLKRRGFNIIDEVVGLSDHPSFTDIKDLASRAIAMFADGAYDELYIYYNHYVSKISQEVTENKILPLTDVASDKPTTAYEFEPSEEEILKVLLPQYAESLVYGALLDGKASEHAARMTAMKSATDNAMEVIDSLTLSFNRARQAAITQEITEIVGGAAALE</sequence>